<feature type="transit peptide" description="Chloroplast" evidence="7">
    <location>
        <begin position="1"/>
        <end position="77"/>
    </location>
</feature>
<feature type="chain" id="PRO_0000429927" description="Fatty acid desaturase 4, chloroplastic">
    <location>
        <begin position="78"/>
        <end position="323"/>
    </location>
</feature>
<feature type="transmembrane region" description="Helical" evidence="2">
    <location>
        <begin position="101"/>
        <end position="121"/>
    </location>
</feature>
<feature type="transmembrane region" description="Helical" evidence="2">
    <location>
        <begin position="131"/>
        <end position="151"/>
    </location>
</feature>
<feature type="transmembrane region" description="Helical" evidence="2">
    <location>
        <begin position="204"/>
        <end position="224"/>
    </location>
</feature>
<feature type="short sequence motif" description="Histidine box-1" evidence="7">
    <location>
        <begin position="170"/>
        <end position="173"/>
    </location>
</feature>
<feature type="short sequence motif" description="Histidine box-2" evidence="7">
    <location>
        <begin position="229"/>
        <end position="233"/>
    </location>
</feature>
<feature type="short sequence motif" description="Histidine box-3" evidence="7">
    <location>
        <begin position="258"/>
        <end position="262"/>
    </location>
</feature>
<comment type="function">
    <text evidence="3 4">Fatty acid desaturase involved in the production of chloroplast-specific phosphatidylglycerol molecular species containing 16:1(3E). Catalyzes the formation of a trans double bond introduced close to the carboxyl group of palmitic acid, which is specifically esterified to the sn-2 glyceryl carbon of phosphatidylglycerol.</text>
</comment>
<comment type="catalytic activity">
    <reaction evidence="4">
        <text>a 1-acyl-2-hexadecanoyl-glycerolipid + 2 reduced [2Fe-2S]-[ferredoxin] + O2 + 2 H(+) = a 1-acyl-2-[(3E)-hexadec-3-enoyl]-glycerolipid + 2 oxidized [2Fe-2S]-[ferredoxin] + 2 H2O</text>
        <dbReference type="Rhea" id="RHEA:46764"/>
        <dbReference type="Rhea" id="RHEA-COMP:10000"/>
        <dbReference type="Rhea" id="RHEA-COMP:10001"/>
        <dbReference type="ChEBI" id="CHEBI:15377"/>
        <dbReference type="ChEBI" id="CHEBI:15378"/>
        <dbReference type="ChEBI" id="CHEBI:15379"/>
        <dbReference type="ChEBI" id="CHEBI:33737"/>
        <dbReference type="ChEBI" id="CHEBI:33738"/>
        <dbReference type="ChEBI" id="CHEBI:86999"/>
        <dbReference type="ChEBI" id="CHEBI:87002"/>
        <dbReference type="EC" id="1.14.19.43"/>
    </reaction>
</comment>
<comment type="cofactor">
    <cofactor evidence="1">
        <name>Fe(2+)</name>
        <dbReference type="ChEBI" id="CHEBI:29033"/>
    </cofactor>
</comment>
<comment type="pathway">
    <text evidence="3">Lipid metabolism; fatty acid metabolism.</text>
</comment>
<comment type="subcellular location">
    <subcellularLocation>
        <location evidence="4">Plastid</location>
        <location evidence="4">Chloroplast membrane</location>
        <topology evidence="2">Multi-pass membrane protein</topology>
    </subcellularLocation>
</comment>
<comment type="domain">
    <text evidence="1">The histidine box domains are involved in binding the catalytic metal ions.</text>
</comment>
<comment type="disruption phenotype">
    <text evidence="3 4">No visible phenotype, but missing a chloroplast-specific phosphatidylglycerol molecular species that carries a delta 3-trans-hexadecenoic acid in the sn-2 position of its core glyceryl moiety.</text>
</comment>
<comment type="similarity">
    <text evidence="7">Belongs to the fatty acid desaturase CarF family.</text>
</comment>
<comment type="sequence caution" evidence="7">
    <conflict type="erroneous initiation">
        <sequence resource="EMBL-CDS" id="AAK63863"/>
    </conflict>
    <text>Truncated N-terminus.</text>
</comment>
<keyword id="KW-0150">Chloroplast</keyword>
<keyword id="KW-0276">Fatty acid metabolism</keyword>
<keyword id="KW-0443">Lipid metabolism</keyword>
<keyword id="KW-0472">Membrane</keyword>
<keyword id="KW-0560">Oxidoreductase</keyword>
<keyword id="KW-0934">Plastid</keyword>
<keyword id="KW-1185">Reference proteome</keyword>
<keyword id="KW-0809">Transit peptide</keyword>
<keyword id="KW-0812">Transmembrane</keyword>
<keyword id="KW-1133">Transmembrane helix</keyword>
<name>FAD4_ARATH</name>
<evidence type="ECO:0000250" key="1">
    <source>
        <dbReference type="UniProtKB" id="O00767"/>
    </source>
</evidence>
<evidence type="ECO:0000255" key="2"/>
<evidence type="ECO:0000269" key="3">
    <source>
    </source>
</evidence>
<evidence type="ECO:0000269" key="4">
    <source>
    </source>
</evidence>
<evidence type="ECO:0000303" key="5">
    <source>
    </source>
</evidence>
<evidence type="ECO:0000303" key="6">
    <source>
    </source>
</evidence>
<evidence type="ECO:0000305" key="7"/>
<proteinExistence type="evidence at protein level"/>
<protein>
    <recommendedName>
        <fullName evidence="6">Fatty acid desaturase 4, chloroplastic</fullName>
        <ecNumber evidence="4">1.14.19.43</ecNumber>
    </recommendedName>
    <alternativeName>
        <fullName evidence="5">Fatty acid desaturase A</fullName>
    </alternativeName>
</protein>
<accession>Q9SZ42</accession>
<accession>Q94EW9</accession>
<dbReference type="EC" id="1.14.19.43" evidence="4"/>
<dbReference type="EMBL" id="AL035440">
    <property type="protein sequence ID" value="CAB36549.1"/>
    <property type="molecule type" value="Genomic_DNA"/>
</dbReference>
<dbReference type="EMBL" id="AL161566">
    <property type="protein sequence ID" value="CAB79558.1"/>
    <property type="molecule type" value="Genomic_DNA"/>
</dbReference>
<dbReference type="EMBL" id="CP002687">
    <property type="protein sequence ID" value="AEE85286.1"/>
    <property type="molecule type" value="Genomic_DNA"/>
</dbReference>
<dbReference type="EMBL" id="AF389291">
    <property type="protein sequence ID" value="AAK63863.1"/>
    <property type="status" value="ALT_INIT"/>
    <property type="molecule type" value="mRNA"/>
</dbReference>
<dbReference type="EMBL" id="BT002250">
    <property type="protein sequence ID" value="AAN72261.1"/>
    <property type="molecule type" value="mRNA"/>
</dbReference>
<dbReference type="PIR" id="T04826">
    <property type="entry name" value="T04826"/>
</dbReference>
<dbReference type="RefSeq" id="NP_194433.1">
    <property type="nucleotide sequence ID" value="NM_118837.2"/>
</dbReference>
<dbReference type="FunCoup" id="Q9SZ42">
    <property type="interactions" value="1099"/>
</dbReference>
<dbReference type="STRING" id="3702.Q9SZ42"/>
<dbReference type="iPTMnet" id="Q9SZ42"/>
<dbReference type="PaxDb" id="3702-AT4G27030.1"/>
<dbReference type="ProteomicsDB" id="222441"/>
<dbReference type="DNASU" id="828811"/>
<dbReference type="EnsemblPlants" id="AT4G27030.1">
    <property type="protein sequence ID" value="AT4G27030.1"/>
    <property type="gene ID" value="AT4G27030"/>
</dbReference>
<dbReference type="GeneID" id="828811"/>
<dbReference type="Gramene" id="AT4G27030.1">
    <property type="protein sequence ID" value="AT4G27030.1"/>
    <property type="gene ID" value="AT4G27030"/>
</dbReference>
<dbReference type="KEGG" id="ath:AT4G27030"/>
<dbReference type="Araport" id="AT4G27030"/>
<dbReference type="TAIR" id="AT4G27030">
    <property type="gene designation" value="FADA"/>
</dbReference>
<dbReference type="eggNOG" id="KOG3011">
    <property type="taxonomic scope" value="Eukaryota"/>
</dbReference>
<dbReference type="HOGENOM" id="CLU_065233_0_0_1"/>
<dbReference type="InParanoid" id="Q9SZ42"/>
<dbReference type="OMA" id="FQGHHRW"/>
<dbReference type="OrthoDB" id="5103at2759"/>
<dbReference type="PhylomeDB" id="Q9SZ42"/>
<dbReference type="UniPathway" id="UPA00199"/>
<dbReference type="PRO" id="PR:Q9SZ42"/>
<dbReference type="Proteomes" id="UP000006548">
    <property type="component" value="Chromosome 4"/>
</dbReference>
<dbReference type="ExpressionAtlas" id="Q9SZ42">
    <property type="expression patterns" value="baseline and differential"/>
</dbReference>
<dbReference type="GO" id="GO:0009507">
    <property type="term" value="C:chloroplast"/>
    <property type="evidence" value="ECO:0000314"/>
    <property type="project" value="TAIR"/>
</dbReference>
<dbReference type="GO" id="GO:0031969">
    <property type="term" value="C:chloroplast membrane"/>
    <property type="evidence" value="ECO:0000314"/>
    <property type="project" value="UniProtKB"/>
</dbReference>
<dbReference type="GO" id="GO:0102654">
    <property type="term" value="F:palmitoyl-[glycerolipid] 3-(E)-desaturase activity"/>
    <property type="evidence" value="ECO:0000314"/>
    <property type="project" value="UniProtKB"/>
</dbReference>
<dbReference type="GO" id="GO:0046471">
    <property type="term" value="P:phosphatidylglycerol metabolic process"/>
    <property type="evidence" value="ECO:0000315"/>
    <property type="project" value="TAIR"/>
</dbReference>
<dbReference type="GO" id="GO:0006636">
    <property type="term" value="P:unsaturated fatty acid biosynthetic process"/>
    <property type="evidence" value="ECO:0000315"/>
    <property type="project" value="TAIR"/>
</dbReference>
<dbReference type="InterPro" id="IPR052864">
    <property type="entry name" value="Chloroplast_FAD_CarF"/>
</dbReference>
<dbReference type="InterPro" id="IPR019547">
    <property type="entry name" value="Lipid_desat"/>
</dbReference>
<dbReference type="PANTHER" id="PTHR48140">
    <property type="entry name" value="FATTY ACID DESATURASE 4, CHLOROPLASTIC-RELATED"/>
    <property type="match status" value="1"/>
</dbReference>
<dbReference type="PANTHER" id="PTHR48140:SF1">
    <property type="entry name" value="FATTY ACID DESATURASE 4, CHLOROPLASTIC-RELATED"/>
    <property type="match status" value="1"/>
</dbReference>
<dbReference type="Pfam" id="PF10520">
    <property type="entry name" value="Lipid_desat"/>
    <property type="match status" value="1"/>
</dbReference>
<gene>
    <name evidence="6" type="primary">FAD4</name>
    <name evidence="5" type="synonym">FADA</name>
    <name type="ordered locus">At4g27030</name>
    <name type="ORF">F10M23.370</name>
</gene>
<reference key="1">
    <citation type="journal article" date="1999" name="Nature">
        <title>Sequence and analysis of chromosome 4 of the plant Arabidopsis thaliana.</title>
        <authorList>
            <person name="Mayer K.F.X."/>
            <person name="Schueller C."/>
            <person name="Wambutt R."/>
            <person name="Murphy G."/>
            <person name="Volckaert G."/>
            <person name="Pohl T."/>
            <person name="Duesterhoeft A."/>
            <person name="Stiekema W."/>
            <person name="Entian K.-D."/>
            <person name="Terryn N."/>
            <person name="Harris B."/>
            <person name="Ansorge W."/>
            <person name="Brandt P."/>
            <person name="Grivell L.A."/>
            <person name="Rieger M."/>
            <person name="Weichselgartner M."/>
            <person name="de Simone V."/>
            <person name="Obermaier B."/>
            <person name="Mache R."/>
            <person name="Mueller M."/>
            <person name="Kreis M."/>
            <person name="Delseny M."/>
            <person name="Puigdomenech P."/>
            <person name="Watson M."/>
            <person name="Schmidtheini T."/>
            <person name="Reichert B."/>
            <person name="Portetelle D."/>
            <person name="Perez-Alonso M."/>
            <person name="Boutry M."/>
            <person name="Bancroft I."/>
            <person name="Vos P."/>
            <person name="Hoheisel J."/>
            <person name="Zimmermann W."/>
            <person name="Wedler H."/>
            <person name="Ridley P."/>
            <person name="Langham S.-A."/>
            <person name="McCullagh B."/>
            <person name="Bilham L."/>
            <person name="Robben J."/>
            <person name="van der Schueren J."/>
            <person name="Grymonprez B."/>
            <person name="Chuang Y.-J."/>
            <person name="Vandenbussche F."/>
            <person name="Braeken M."/>
            <person name="Weltjens I."/>
            <person name="Voet M."/>
            <person name="Bastiaens I."/>
            <person name="Aert R."/>
            <person name="Defoor E."/>
            <person name="Weitzenegger T."/>
            <person name="Bothe G."/>
            <person name="Ramsperger U."/>
            <person name="Hilbert H."/>
            <person name="Braun M."/>
            <person name="Holzer E."/>
            <person name="Brandt A."/>
            <person name="Peters S."/>
            <person name="van Staveren M."/>
            <person name="Dirkse W."/>
            <person name="Mooijman P."/>
            <person name="Klein Lankhorst R."/>
            <person name="Rose M."/>
            <person name="Hauf J."/>
            <person name="Koetter P."/>
            <person name="Berneiser S."/>
            <person name="Hempel S."/>
            <person name="Feldpausch M."/>
            <person name="Lamberth S."/>
            <person name="Van den Daele H."/>
            <person name="De Keyser A."/>
            <person name="Buysshaert C."/>
            <person name="Gielen J."/>
            <person name="Villarroel R."/>
            <person name="De Clercq R."/>
            <person name="van Montagu M."/>
            <person name="Rogers J."/>
            <person name="Cronin A."/>
            <person name="Quail M.A."/>
            <person name="Bray-Allen S."/>
            <person name="Clark L."/>
            <person name="Doggett J."/>
            <person name="Hall S."/>
            <person name="Kay M."/>
            <person name="Lennard N."/>
            <person name="McLay K."/>
            <person name="Mayes R."/>
            <person name="Pettett A."/>
            <person name="Rajandream M.A."/>
            <person name="Lyne M."/>
            <person name="Benes V."/>
            <person name="Rechmann S."/>
            <person name="Borkova D."/>
            <person name="Bloecker H."/>
            <person name="Scharfe M."/>
            <person name="Grimm M."/>
            <person name="Loehnert T.-H."/>
            <person name="Dose S."/>
            <person name="de Haan M."/>
            <person name="Maarse A.C."/>
            <person name="Schaefer M."/>
            <person name="Mueller-Auer S."/>
            <person name="Gabel C."/>
            <person name="Fuchs M."/>
            <person name="Fartmann B."/>
            <person name="Granderath K."/>
            <person name="Dauner D."/>
            <person name="Herzl A."/>
            <person name="Neumann S."/>
            <person name="Argiriou A."/>
            <person name="Vitale D."/>
            <person name="Liguori R."/>
            <person name="Piravandi E."/>
            <person name="Massenet O."/>
            <person name="Quigley F."/>
            <person name="Clabauld G."/>
            <person name="Muendlein A."/>
            <person name="Felber R."/>
            <person name="Schnabl S."/>
            <person name="Hiller R."/>
            <person name="Schmidt W."/>
            <person name="Lecharny A."/>
            <person name="Aubourg S."/>
            <person name="Chefdor F."/>
            <person name="Cooke R."/>
            <person name="Berger C."/>
            <person name="Monfort A."/>
            <person name="Casacuberta E."/>
            <person name="Gibbons T."/>
            <person name="Weber N."/>
            <person name="Vandenbol M."/>
            <person name="Bargues M."/>
            <person name="Terol J."/>
            <person name="Torres A."/>
            <person name="Perez-Perez A."/>
            <person name="Purnelle B."/>
            <person name="Bent E."/>
            <person name="Johnson S."/>
            <person name="Tacon D."/>
            <person name="Jesse T."/>
            <person name="Heijnen L."/>
            <person name="Schwarz S."/>
            <person name="Scholler P."/>
            <person name="Heber S."/>
            <person name="Francs P."/>
            <person name="Bielke C."/>
            <person name="Frishman D."/>
            <person name="Haase D."/>
            <person name="Lemcke K."/>
            <person name="Mewes H.-W."/>
            <person name="Stocker S."/>
            <person name="Zaccaria P."/>
            <person name="Bevan M."/>
            <person name="Wilson R.K."/>
            <person name="de la Bastide M."/>
            <person name="Habermann K."/>
            <person name="Parnell L."/>
            <person name="Dedhia N."/>
            <person name="Gnoj L."/>
            <person name="Schutz K."/>
            <person name="Huang E."/>
            <person name="Spiegel L."/>
            <person name="Sekhon M."/>
            <person name="Murray J."/>
            <person name="Sheet P."/>
            <person name="Cordes M."/>
            <person name="Abu-Threideh J."/>
            <person name="Stoneking T."/>
            <person name="Kalicki J."/>
            <person name="Graves T."/>
            <person name="Harmon G."/>
            <person name="Edwards J."/>
            <person name="Latreille P."/>
            <person name="Courtney L."/>
            <person name="Cloud J."/>
            <person name="Abbott A."/>
            <person name="Scott K."/>
            <person name="Johnson D."/>
            <person name="Minx P."/>
            <person name="Bentley D."/>
            <person name="Fulton B."/>
            <person name="Miller N."/>
            <person name="Greco T."/>
            <person name="Kemp K."/>
            <person name="Kramer J."/>
            <person name="Fulton L."/>
            <person name="Mardis E."/>
            <person name="Dante M."/>
            <person name="Pepin K."/>
            <person name="Hillier L.W."/>
            <person name="Nelson J."/>
            <person name="Spieth J."/>
            <person name="Ryan E."/>
            <person name="Andrews S."/>
            <person name="Geisel C."/>
            <person name="Layman D."/>
            <person name="Du H."/>
            <person name="Ali J."/>
            <person name="Berghoff A."/>
            <person name="Jones K."/>
            <person name="Drone K."/>
            <person name="Cotton M."/>
            <person name="Joshu C."/>
            <person name="Antonoiu B."/>
            <person name="Zidanic M."/>
            <person name="Strong C."/>
            <person name="Sun H."/>
            <person name="Lamar B."/>
            <person name="Yordan C."/>
            <person name="Ma P."/>
            <person name="Zhong J."/>
            <person name="Preston R."/>
            <person name="Vil D."/>
            <person name="Shekher M."/>
            <person name="Matero A."/>
            <person name="Shah R."/>
            <person name="Swaby I.K."/>
            <person name="O'Shaughnessy A."/>
            <person name="Rodriguez M."/>
            <person name="Hoffman J."/>
            <person name="Till S."/>
            <person name="Granat S."/>
            <person name="Shohdy N."/>
            <person name="Hasegawa A."/>
            <person name="Hameed A."/>
            <person name="Lodhi M."/>
            <person name="Johnson A."/>
            <person name="Chen E."/>
            <person name="Marra M.A."/>
            <person name="Martienssen R."/>
            <person name="McCombie W.R."/>
        </authorList>
    </citation>
    <scope>NUCLEOTIDE SEQUENCE [LARGE SCALE GENOMIC DNA]</scope>
    <source>
        <strain>cv. Columbia</strain>
    </source>
</reference>
<reference key="2">
    <citation type="journal article" date="2017" name="Plant J.">
        <title>Araport11: a complete reannotation of the Arabidopsis thaliana reference genome.</title>
        <authorList>
            <person name="Cheng C.Y."/>
            <person name="Krishnakumar V."/>
            <person name="Chan A.P."/>
            <person name="Thibaud-Nissen F."/>
            <person name="Schobel S."/>
            <person name="Town C.D."/>
        </authorList>
    </citation>
    <scope>GENOME REANNOTATION</scope>
    <source>
        <strain>cv. Columbia</strain>
    </source>
</reference>
<reference key="3">
    <citation type="journal article" date="2003" name="Science">
        <title>Empirical analysis of transcriptional activity in the Arabidopsis genome.</title>
        <authorList>
            <person name="Yamada K."/>
            <person name="Lim J."/>
            <person name="Dale J.M."/>
            <person name="Chen H."/>
            <person name="Shinn P."/>
            <person name="Palm C.J."/>
            <person name="Southwick A.M."/>
            <person name="Wu H.C."/>
            <person name="Kim C.J."/>
            <person name="Nguyen M."/>
            <person name="Pham P.K."/>
            <person name="Cheuk R.F."/>
            <person name="Karlin-Newmann G."/>
            <person name="Liu S.X."/>
            <person name="Lam B."/>
            <person name="Sakano H."/>
            <person name="Wu T."/>
            <person name="Yu G."/>
            <person name="Miranda M."/>
            <person name="Quach H.L."/>
            <person name="Tripp M."/>
            <person name="Chang C.H."/>
            <person name="Lee J.M."/>
            <person name="Toriumi M.J."/>
            <person name="Chan M.M."/>
            <person name="Tang C.C."/>
            <person name="Onodera C.S."/>
            <person name="Deng J.M."/>
            <person name="Akiyama K."/>
            <person name="Ansari Y."/>
            <person name="Arakawa T."/>
            <person name="Banh J."/>
            <person name="Banno F."/>
            <person name="Bowser L."/>
            <person name="Brooks S.Y."/>
            <person name="Carninci P."/>
            <person name="Chao Q."/>
            <person name="Choy N."/>
            <person name="Enju A."/>
            <person name="Goldsmith A.D."/>
            <person name="Gurjal M."/>
            <person name="Hansen N.F."/>
            <person name="Hayashizaki Y."/>
            <person name="Johnson-Hopson C."/>
            <person name="Hsuan V.W."/>
            <person name="Iida K."/>
            <person name="Karnes M."/>
            <person name="Khan S."/>
            <person name="Koesema E."/>
            <person name="Ishida J."/>
            <person name="Jiang P.X."/>
            <person name="Jones T."/>
            <person name="Kawai J."/>
            <person name="Kamiya A."/>
            <person name="Meyers C."/>
            <person name="Nakajima M."/>
            <person name="Narusaka M."/>
            <person name="Seki M."/>
            <person name="Sakurai T."/>
            <person name="Satou M."/>
            <person name="Tamse R."/>
            <person name="Vaysberg M."/>
            <person name="Wallender E.K."/>
            <person name="Wong C."/>
            <person name="Yamamura Y."/>
            <person name="Yuan S."/>
            <person name="Shinozaki K."/>
            <person name="Davis R.W."/>
            <person name="Theologis A."/>
            <person name="Ecker J.R."/>
        </authorList>
    </citation>
    <scope>NUCLEOTIDE SEQUENCE [LARGE SCALE MRNA] OF 164-323</scope>
    <source>
        <strain>cv. Columbia</strain>
    </source>
</reference>
<reference key="4">
    <citation type="journal article" date="1985" name="Science">
        <title>A mutant of Arabidopsis lacking a chloroplast-specific lipid.</title>
        <authorList>
            <person name="Browse J."/>
            <person name="McCourt P."/>
            <person name="Somerville C.R."/>
        </authorList>
    </citation>
    <scope>FUNCTION</scope>
    <scope>DISRUPTION PHENOTYPE</scope>
    <scope>PATHWAY</scope>
</reference>
<reference key="5">
    <citation type="journal article" date="2009" name="Plant J.">
        <title>FATTY ACID DESATURASE4 of Arabidopsis encodes a protein distinct from characterized fatty acid desaturases.</title>
        <authorList>
            <person name="Gao J."/>
            <person name="Ajjawi I."/>
            <person name="Manoli A."/>
            <person name="Sawin A."/>
            <person name="Xu C."/>
            <person name="Froehlich J.E."/>
            <person name="Last R.L."/>
            <person name="Benning C."/>
        </authorList>
    </citation>
    <scope>FUNCTION</scope>
    <scope>CATALYTIC ACTIVITY</scope>
    <scope>DISRUPTION PHENOTYPE</scope>
    <scope>SUBCELLULAR LOCATION</scope>
    <scope>GENE FAMILY</scope>
    <scope>NOMENCLATURE</scope>
    <source>
        <strain>cv. Col-2</strain>
    </source>
</reference>
<sequence>MAVSLPTKYPLRPITNIPKSHRPSLLRVRVTCSVTTTKPQPNREKLLVEQRTVNLPLSNDQSLQSTKPRPNREKLVVEQRLASPPLSNDPTLKSTWTHRLWVAAGCTTLFVSLAKSVIGGFDSHLCLEPALAGYAGYILADLGSGVYHWAIDNYGDESTPVVGTQIEAFQGHHKWPWTITRRQFANNLHALAQVITFTVLPLDLAFNDPVFHGFVCTFAFCILFSQQFHAWAHGTKSKLPPLVVALQDMGLLVSRRQHAEHHRAPYNNNYCIVSGAWNNVLDESKVFEALEMVFYFQLGVRPRSWSEPNSDWIEETEISNNQA</sequence>
<organism>
    <name type="scientific">Arabidopsis thaliana</name>
    <name type="common">Mouse-ear cress</name>
    <dbReference type="NCBI Taxonomy" id="3702"/>
    <lineage>
        <taxon>Eukaryota</taxon>
        <taxon>Viridiplantae</taxon>
        <taxon>Streptophyta</taxon>
        <taxon>Embryophyta</taxon>
        <taxon>Tracheophyta</taxon>
        <taxon>Spermatophyta</taxon>
        <taxon>Magnoliopsida</taxon>
        <taxon>eudicotyledons</taxon>
        <taxon>Gunneridae</taxon>
        <taxon>Pentapetalae</taxon>
        <taxon>rosids</taxon>
        <taxon>malvids</taxon>
        <taxon>Brassicales</taxon>
        <taxon>Brassicaceae</taxon>
        <taxon>Camelineae</taxon>
        <taxon>Arabidopsis</taxon>
    </lineage>
</organism>